<proteinExistence type="inferred from homology"/>
<evidence type="ECO:0000255" key="1"/>
<evidence type="ECO:0000255" key="2">
    <source>
        <dbReference type="PROSITE-ProRule" id="PRU00498"/>
    </source>
</evidence>
<evidence type="ECO:0000303" key="3">
    <source>
    </source>
</evidence>
<evidence type="ECO:0000305" key="4"/>
<evidence type="ECO:0000305" key="5">
    <source>
    </source>
</evidence>
<feature type="signal peptide" evidence="1">
    <location>
        <begin position="1"/>
        <end position="21"/>
    </location>
</feature>
<feature type="chain" id="PRO_5003285286" description="S-protein homolog 16">
    <location>
        <begin position="22"/>
        <end position="137"/>
    </location>
</feature>
<feature type="glycosylation site" description="N-linked (GlcNAc...) asparagine" evidence="2">
    <location>
        <position position="87"/>
    </location>
</feature>
<sequence length="137" mass="16337">MKNLLVFIFVFSLCMFDHVSGAGIRIGNELKFQKLLWMRCYSKDDVLGPKIIPIGGHFVTYFSVNIWRTTRFMCTLKQGPNYRHYQNFTAFKLFGMEDHGDVWDWRARENEIYLKKKEGGKFIKNPVNMHKVYDWIN</sequence>
<protein>
    <recommendedName>
        <fullName evidence="3">S-protein homolog 16</fullName>
    </recommendedName>
</protein>
<accession>F2Q9V5</accession>
<name>SPH16_ARATH</name>
<keyword id="KW-0325">Glycoprotein</keyword>
<keyword id="KW-1185">Reference proteome</keyword>
<keyword id="KW-0964">Secreted</keyword>
<keyword id="KW-0713">Self-incompatibility</keyword>
<keyword id="KW-0732">Signal</keyword>
<reference key="1">
    <citation type="submission" date="2011-03" db="EMBL/GenBank/DDBJ databases">
        <title>SPH: a novel family of secreted proteins with members implicated in plant defense regulation and development.</title>
        <authorList>
            <person name="Wheeler M.J."/>
            <person name="Bell E.M."/>
            <person name="Holub E.B."/>
            <person name="Ride J."/>
            <person name="Franklin-Tong V.E."/>
            <person name="Franklin F.H."/>
        </authorList>
    </citation>
    <scope>NUCLEOTIDE SEQUENCE [GENOMIC DNA]</scope>
    <source>
        <strain>cv. Columbia</strain>
    </source>
</reference>
<reference key="2">
    <citation type="journal article" date="1999" name="Nature">
        <title>Sequence and analysis of chromosome 4 of the plant Arabidopsis thaliana.</title>
        <authorList>
            <person name="Mayer K.F.X."/>
            <person name="Schueller C."/>
            <person name="Wambutt R."/>
            <person name="Murphy G."/>
            <person name="Volckaert G."/>
            <person name="Pohl T."/>
            <person name="Duesterhoeft A."/>
            <person name="Stiekema W."/>
            <person name="Entian K.-D."/>
            <person name="Terryn N."/>
            <person name="Harris B."/>
            <person name="Ansorge W."/>
            <person name="Brandt P."/>
            <person name="Grivell L.A."/>
            <person name="Rieger M."/>
            <person name="Weichselgartner M."/>
            <person name="de Simone V."/>
            <person name="Obermaier B."/>
            <person name="Mache R."/>
            <person name="Mueller M."/>
            <person name="Kreis M."/>
            <person name="Delseny M."/>
            <person name="Puigdomenech P."/>
            <person name="Watson M."/>
            <person name="Schmidtheini T."/>
            <person name="Reichert B."/>
            <person name="Portetelle D."/>
            <person name="Perez-Alonso M."/>
            <person name="Boutry M."/>
            <person name="Bancroft I."/>
            <person name="Vos P."/>
            <person name="Hoheisel J."/>
            <person name="Zimmermann W."/>
            <person name="Wedler H."/>
            <person name="Ridley P."/>
            <person name="Langham S.-A."/>
            <person name="McCullagh B."/>
            <person name="Bilham L."/>
            <person name="Robben J."/>
            <person name="van der Schueren J."/>
            <person name="Grymonprez B."/>
            <person name="Chuang Y.-J."/>
            <person name="Vandenbussche F."/>
            <person name="Braeken M."/>
            <person name="Weltjens I."/>
            <person name="Voet M."/>
            <person name="Bastiaens I."/>
            <person name="Aert R."/>
            <person name="Defoor E."/>
            <person name="Weitzenegger T."/>
            <person name="Bothe G."/>
            <person name="Ramsperger U."/>
            <person name="Hilbert H."/>
            <person name="Braun M."/>
            <person name="Holzer E."/>
            <person name="Brandt A."/>
            <person name="Peters S."/>
            <person name="van Staveren M."/>
            <person name="Dirkse W."/>
            <person name="Mooijman P."/>
            <person name="Klein Lankhorst R."/>
            <person name="Rose M."/>
            <person name="Hauf J."/>
            <person name="Koetter P."/>
            <person name="Berneiser S."/>
            <person name="Hempel S."/>
            <person name="Feldpausch M."/>
            <person name="Lamberth S."/>
            <person name="Van den Daele H."/>
            <person name="De Keyser A."/>
            <person name="Buysshaert C."/>
            <person name="Gielen J."/>
            <person name="Villarroel R."/>
            <person name="De Clercq R."/>
            <person name="van Montagu M."/>
            <person name="Rogers J."/>
            <person name="Cronin A."/>
            <person name="Quail M.A."/>
            <person name="Bray-Allen S."/>
            <person name="Clark L."/>
            <person name="Doggett J."/>
            <person name="Hall S."/>
            <person name="Kay M."/>
            <person name="Lennard N."/>
            <person name="McLay K."/>
            <person name="Mayes R."/>
            <person name="Pettett A."/>
            <person name="Rajandream M.A."/>
            <person name="Lyne M."/>
            <person name="Benes V."/>
            <person name="Rechmann S."/>
            <person name="Borkova D."/>
            <person name="Bloecker H."/>
            <person name="Scharfe M."/>
            <person name="Grimm M."/>
            <person name="Loehnert T.-H."/>
            <person name="Dose S."/>
            <person name="de Haan M."/>
            <person name="Maarse A.C."/>
            <person name="Schaefer M."/>
            <person name="Mueller-Auer S."/>
            <person name="Gabel C."/>
            <person name="Fuchs M."/>
            <person name="Fartmann B."/>
            <person name="Granderath K."/>
            <person name="Dauner D."/>
            <person name="Herzl A."/>
            <person name="Neumann S."/>
            <person name="Argiriou A."/>
            <person name="Vitale D."/>
            <person name="Liguori R."/>
            <person name="Piravandi E."/>
            <person name="Massenet O."/>
            <person name="Quigley F."/>
            <person name="Clabauld G."/>
            <person name="Muendlein A."/>
            <person name="Felber R."/>
            <person name="Schnabl S."/>
            <person name="Hiller R."/>
            <person name="Schmidt W."/>
            <person name="Lecharny A."/>
            <person name="Aubourg S."/>
            <person name="Chefdor F."/>
            <person name="Cooke R."/>
            <person name="Berger C."/>
            <person name="Monfort A."/>
            <person name="Casacuberta E."/>
            <person name="Gibbons T."/>
            <person name="Weber N."/>
            <person name="Vandenbol M."/>
            <person name="Bargues M."/>
            <person name="Terol J."/>
            <person name="Torres A."/>
            <person name="Perez-Perez A."/>
            <person name="Purnelle B."/>
            <person name="Bent E."/>
            <person name="Johnson S."/>
            <person name="Tacon D."/>
            <person name="Jesse T."/>
            <person name="Heijnen L."/>
            <person name="Schwarz S."/>
            <person name="Scholler P."/>
            <person name="Heber S."/>
            <person name="Francs P."/>
            <person name="Bielke C."/>
            <person name="Frishman D."/>
            <person name="Haase D."/>
            <person name="Lemcke K."/>
            <person name="Mewes H.-W."/>
            <person name="Stocker S."/>
            <person name="Zaccaria P."/>
            <person name="Bevan M."/>
            <person name="Wilson R.K."/>
            <person name="de la Bastide M."/>
            <person name="Habermann K."/>
            <person name="Parnell L."/>
            <person name="Dedhia N."/>
            <person name="Gnoj L."/>
            <person name="Schutz K."/>
            <person name="Huang E."/>
            <person name="Spiegel L."/>
            <person name="Sekhon M."/>
            <person name="Murray J."/>
            <person name="Sheet P."/>
            <person name="Cordes M."/>
            <person name="Abu-Threideh J."/>
            <person name="Stoneking T."/>
            <person name="Kalicki J."/>
            <person name="Graves T."/>
            <person name="Harmon G."/>
            <person name="Edwards J."/>
            <person name="Latreille P."/>
            <person name="Courtney L."/>
            <person name="Cloud J."/>
            <person name="Abbott A."/>
            <person name="Scott K."/>
            <person name="Johnson D."/>
            <person name="Minx P."/>
            <person name="Bentley D."/>
            <person name="Fulton B."/>
            <person name="Miller N."/>
            <person name="Greco T."/>
            <person name="Kemp K."/>
            <person name="Kramer J."/>
            <person name="Fulton L."/>
            <person name="Mardis E."/>
            <person name="Dante M."/>
            <person name="Pepin K."/>
            <person name="Hillier L.W."/>
            <person name="Nelson J."/>
            <person name="Spieth J."/>
            <person name="Ryan E."/>
            <person name="Andrews S."/>
            <person name="Geisel C."/>
            <person name="Layman D."/>
            <person name="Du H."/>
            <person name="Ali J."/>
            <person name="Berghoff A."/>
            <person name="Jones K."/>
            <person name="Drone K."/>
            <person name="Cotton M."/>
            <person name="Joshu C."/>
            <person name="Antonoiu B."/>
            <person name="Zidanic M."/>
            <person name="Strong C."/>
            <person name="Sun H."/>
            <person name="Lamar B."/>
            <person name="Yordan C."/>
            <person name="Ma P."/>
            <person name="Zhong J."/>
            <person name="Preston R."/>
            <person name="Vil D."/>
            <person name="Shekher M."/>
            <person name="Matero A."/>
            <person name="Shah R."/>
            <person name="Swaby I.K."/>
            <person name="O'Shaughnessy A."/>
            <person name="Rodriguez M."/>
            <person name="Hoffman J."/>
            <person name="Till S."/>
            <person name="Granat S."/>
            <person name="Shohdy N."/>
            <person name="Hasegawa A."/>
            <person name="Hameed A."/>
            <person name="Lodhi M."/>
            <person name="Johnson A."/>
            <person name="Chen E."/>
            <person name="Marra M.A."/>
            <person name="Martienssen R."/>
            <person name="McCombie W.R."/>
        </authorList>
    </citation>
    <scope>NUCLEOTIDE SEQUENCE [LARGE SCALE GENOMIC DNA]</scope>
    <source>
        <strain>cv. Columbia</strain>
    </source>
</reference>
<reference key="3">
    <citation type="journal article" date="2017" name="Plant J.">
        <title>Araport11: a complete reannotation of the Arabidopsis thaliana reference genome.</title>
        <authorList>
            <person name="Cheng C.Y."/>
            <person name="Krishnakumar V."/>
            <person name="Chan A.P."/>
            <person name="Thibaud-Nissen F."/>
            <person name="Schobel S."/>
            <person name="Town C.D."/>
        </authorList>
    </citation>
    <scope>GENOME REANNOTATION</scope>
    <source>
        <strain>cv. Columbia</strain>
    </source>
</reference>
<reference key="4">
    <citation type="journal article" date="1999" name="Plant Mol. Biol.">
        <title>Analysis of Arabidopsis genome sequence reveals a large new gene family in plants.</title>
        <authorList>
            <person name="Ride J.P."/>
            <person name="Davies E.M."/>
            <person name="Franklin F.C.H."/>
            <person name="Marshall D.F."/>
        </authorList>
    </citation>
    <scope>GENE FAMILY</scope>
    <scope>NOMENCLATURE</scope>
    <source>
        <strain>cv. Columbia</strain>
    </source>
</reference>
<comment type="subcellular location">
    <subcellularLocation>
        <location evidence="5">Secreted</location>
    </subcellularLocation>
</comment>
<comment type="similarity">
    <text evidence="4">Belongs to the plant self-incompatibility (S1) protein family.</text>
</comment>
<gene>
    <name evidence="3" type="primary">SPH16</name>
    <name evidence="4" type="ordered locus">At4g23498</name>
    <name evidence="4" type="ORF">F16G20</name>
</gene>
<dbReference type="EMBL" id="FN691475">
    <property type="protein sequence ID" value="CBL43000.1"/>
    <property type="molecule type" value="Genomic_DNA"/>
</dbReference>
<dbReference type="EMBL" id="AL031326">
    <property type="status" value="NOT_ANNOTATED_CDS"/>
    <property type="molecule type" value="Genomic_DNA"/>
</dbReference>
<dbReference type="EMBL" id="CP002687">
    <property type="status" value="NOT_ANNOTATED_CDS"/>
    <property type="molecule type" value="Genomic_DNA"/>
</dbReference>
<dbReference type="SMR" id="F2Q9V5"/>
<dbReference type="GlyCosmos" id="F2Q9V5">
    <property type="glycosylation" value="1 site, No reported glycans"/>
</dbReference>
<dbReference type="GlyGen" id="F2Q9V5">
    <property type="glycosylation" value="1 site"/>
</dbReference>
<dbReference type="Araport" id="AT4G23498"/>
<dbReference type="TAIR" id="AT4G23498"/>
<dbReference type="InParanoid" id="F2Q9V5"/>
<dbReference type="PRO" id="PR:F2Q9V5"/>
<dbReference type="Proteomes" id="UP000006548">
    <property type="component" value="Chromosome 4"/>
</dbReference>
<dbReference type="ExpressionAtlas" id="F2Q9V5">
    <property type="expression patterns" value="baseline"/>
</dbReference>
<dbReference type="GO" id="GO:0005576">
    <property type="term" value="C:extracellular region"/>
    <property type="evidence" value="ECO:0007669"/>
    <property type="project" value="UniProtKB-SubCell"/>
</dbReference>
<dbReference type="GO" id="GO:0060320">
    <property type="term" value="P:rejection of self pollen"/>
    <property type="evidence" value="ECO:0007669"/>
    <property type="project" value="UniProtKB-KW"/>
</dbReference>
<dbReference type="InterPro" id="IPR010264">
    <property type="entry name" value="Self-incomp_S1"/>
</dbReference>
<dbReference type="PANTHER" id="PTHR31232">
    <property type="match status" value="1"/>
</dbReference>
<dbReference type="PANTHER" id="PTHR31232:SF54">
    <property type="entry name" value="S-PROTEIN HOMOLOG-RELATED"/>
    <property type="match status" value="1"/>
</dbReference>
<dbReference type="Pfam" id="PF05938">
    <property type="entry name" value="Self-incomp_S1"/>
    <property type="match status" value="1"/>
</dbReference>
<organism>
    <name type="scientific">Arabidopsis thaliana</name>
    <name type="common">Mouse-ear cress</name>
    <dbReference type="NCBI Taxonomy" id="3702"/>
    <lineage>
        <taxon>Eukaryota</taxon>
        <taxon>Viridiplantae</taxon>
        <taxon>Streptophyta</taxon>
        <taxon>Embryophyta</taxon>
        <taxon>Tracheophyta</taxon>
        <taxon>Spermatophyta</taxon>
        <taxon>Magnoliopsida</taxon>
        <taxon>eudicotyledons</taxon>
        <taxon>Gunneridae</taxon>
        <taxon>Pentapetalae</taxon>
        <taxon>rosids</taxon>
        <taxon>malvids</taxon>
        <taxon>Brassicales</taxon>
        <taxon>Brassicaceae</taxon>
        <taxon>Camelineae</taxon>
        <taxon>Arabidopsis</taxon>
    </lineage>
</organism>